<evidence type="ECO:0000250" key="1"/>
<evidence type="ECO:0000255" key="2">
    <source>
        <dbReference type="HAMAP-Rule" id="MF_00103"/>
    </source>
</evidence>
<comment type="function">
    <text evidence="2">Involved in base excision repair of DNA damaged by oxidation or by mutagenic agents. Acts as a DNA glycosylase that recognizes and removes damaged bases. Has a preference for oxidized purines, such as 7,8-dihydro-8-oxoguanine (8-oxoG). Has AP (apurinic/apyrimidinic) lyase activity and introduces nicks in the DNA strand. Cleaves the DNA backbone by beta-delta elimination to generate a single-strand break at the site of the removed base with both 3'- and 5'-phosphates.</text>
</comment>
<comment type="catalytic activity">
    <reaction evidence="2">
        <text>Hydrolysis of DNA containing ring-opened 7-methylguanine residues, releasing 2,6-diamino-4-hydroxy-5-(N-methyl)formamidopyrimidine.</text>
        <dbReference type="EC" id="3.2.2.23"/>
    </reaction>
</comment>
<comment type="catalytic activity">
    <reaction evidence="2">
        <text>2'-deoxyribonucleotide-(2'-deoxyribose 5'-phosphate)-2'-deoxyribonucleotide-DNA = a 3'-end 2'-deoxyribonucleotide-(2,3-dehydro-2,3-deoxyribose 5'-phosphate)-DNA + a 5'-end 5'-phospho-2'-deoxyribonucleoside-DNA + H(+)</text>
        <dbReference type="Rhea" id="RHEA:66592"/>
        <dbReference type="Rhea" id="RHEA-COMP:13180"/>
        <dbReference type="Rhea" id="RHEA-COMP:16897"/>
        <dbReference type="Rhea" id="RHEA-COMP:17067"/>
        <dbReference type="ChEBI" id="CHEBI:15378"/>
        <dbReference type="ChEBI" id="CHEBI:136412"/>
        <dbReference type="ChEBI" id="CHEBI:157695"/>
        <dbReference type="ChEBI" id="CHEBI:167181"/>
        <dbReference type="EC" id="4.2.99.18"/>
    </reaction>
</comment>
<comment type="cofactor">
    <cofactor evidence="2">
        <name>Zn(2+)</name>
        <dbReference type="ChEBI" id="CHEBI:29105"/>
    </cofactor>
    <text evidence="2">Binds 1 zinc ion per subunit.</text>
</comment>
<comment type="subunit">
    <text evidence="2">Monomer.</text>
</comment>
<comment type="similarity">
    <text evidence="2">Belongs to the FPG family.</text>
</comment>
<reference key="1">
    <citation type="journal article" date="2001" name="Science">
        <title>Comparative genomics of Listeria species.</title>
        <authorList>
            <person name="Glaser P."/>
            <person name="Frangeul L."/>
            <person name="Buchrieser C."/>
            <person name="Rusniok C."/>
            <person name="Amend A."/>
            <person name="Baquero F."/>
            <person name="Berche P."/>
            <person name="Bloecker H."/>
            <person name="Brandt P."/>
            <person name="Chakraborty T."/>
            <person name="Charbit A."/>
            <person name="Chetouani F."/>
            <person name="Couve E."/>
            <person name="de Daruvar A."/>
            <person name="Dehoux P."/>
            <person name="Domann E."/>
            <person name="Dominguez-Bernal G."/>
            <person name="Duchaud E."/>
            <person name="Durant L."/>
            <person name="Dussurget O."/>
            <person name="Entian K.-D."/>
            <person name="Fsihi H."/>
            <person name="Garcia-del Portillo F."/>
            <person name="Garrido P."/>
            <person name="Gautier L."/>
            <person name="Goebel W."/>
            <person name="Gomez-Lopez N."/>
            <person name="Hain T."/>
            <person name="Hauf J."/>
            <person name="Jackson D."/>
            <person name="Jones L.-M."/>
            <person name="Kaerst U."/>
            <person name="Kreft J."/>
            <person name="Kuhn M."/>
            <person name="Kunst F."/>
            <person name="Kurapkat G."/>
            <person name="Madueno E."/>
            <person name="Maitournam A."/>
            <person name="Mata Vicente J."/>
            <person name="Ng E."/>
            <person name="Nedjari H."/>
            <person name="Nordsiek G."/>
            <person name="Novella S."/>
            <person name="de Pablos B."/>
            <person name="Perez-Diaz J.-C."/>
            <person name="Purcell R."/>
            <person name="Remmel B."/>
            <person name="Rose M."/>
            <person name="Schlueter T."/>
            <person name="Simoes N."/>
            <person name="Tierrez A."/>
            <person name="Vazquez-Boland J.-A."/>
            <person name="Voss H."/>
            <person name="Wehland J."/>
            <person name="Cossart P."/>
        </authorList>
    </citation>
    <scope>NUCLEOTIDE SEQUENCE [LARGE SCALE GENOMIC DNA]</scope>
    <source>
        <strain>ATCC BAA-679 / EGD-e</strain>
    </source>
</reference>
<proteinExistence type="inferred from homology"/>
<feature type="initiator methionine" description="Removed" evidence="1">
    <location>
        <position position="1"/>
    </location>
</feature>
<feature type="chain" id="PRO_0000170835" description="Formamidopyrimidine-DNA glycosylase">
    <location>
        <begin position="2"/>
        <end position="273"/>
    </location>
</feature>
<feature type="zinc finger region" description="FPG-type" evidence="2">
    <location>
        <begin position="239"/>
        <end position="273"/>
    </location>
</feature>
<feature type="active site" description="Schiff-base intermediate with DNA" evidence="2">
    <location>
        <position position="2"/>
    </location>
</feature>
<feature type="active site" description="Proton donor" evidence="2">
    <location>
        <position position="3"/>
    </location>
</feature>
<feature type="active site" description="Proton donor; for beta-elimination activity" evidence="2">
    <location>
        <position position="59"/>
    </location>
</feature>
<feature type="active site" description="Proton donor; for delta-elimination activity" evidence="2">
    <location>
        <position position="263"/>
    </location>
</feature>
<feature type="binding site" evidence="2">
    <location>
        <position position="92"/>
    </location>
    <ligand>
        <name>DNA</name>
        <dbReference type="ChEBI" id="CHEBI:16991"/>
    </ligand>
</feature>
<feature type="binding site" evidence="2">
    <location>
        <position position="111"/>
    </location>
    <ligand>
        <name>DNA</name>
        <dbReference type="ChEBI" id="CHEBI:16991"/>
    </ligand>
</feature>
<gene>
    <name evidence="2" type="primary">mutM</name>
    <name evidence="2" type="synonym">fpg</name>
    <name type="ordered locus">lmo1564</name>
</gene>
<sequence>MPEMPEVENVRATLQELVPGKKIDQVIVRVPKMIVSTPPDEFVHMLVGQEIEGVRRRGKFLLFDLTNCTILSHLRMEGKFRLMDENEEVSKHTHIIFHFEDHTELRFLDVRKFGTMEVTNKYGEGETRSIKKLGPEPLTQAFTLTDFATGVKKTSRAIKTALLDQKLVAGVGNIYADEICFEAKVRPERAANSLSDKEIKRIFKATKSIMTEAVALGGSTVRTYVNSQGKLGQYQNKLKVYGKTDEPCVVCGTPIEKIKLNGRGTHFCPNCQK</sequence>
<protein>
    <recommendedName>
        <fullName evidence="2">Formamidopyrimidine-DNA glycosylase</fullName>
        <shortName evidence="2">Fapy-DNA glycosylase</shortName>
        <ecNumber evidence="2">3.2.2.23</ecNumber>
    </recommendedName>
    <alternativeName>
        <fullName evidence="2">DNA-(apurinic or apyrimidinic site) lyase MutM</fullName>
        <shortName evidence="2">AP lyase MutM</shortName>
        <ecNumber evidence="2">4.2.99.18</ecNumber>
    </alternativeName>
</protein>
<name>FPG_LISMO</name>
<dbReference type="EC" id="3.2.2.23" evidence="2"/>
<dbReference type="EC" id="4.2.99.18" evidence="2"/>
<dbReference type="EMBL" id="AL591979">
    <property type="protein sequence ID" value="CAC99642.1"/>
    <property type="molecule type" value="Genomic_DNA"/>
</dbReference>
<dbReference type="PIR" id="AD1270">
    <property type="entry name" value="AD1270"/>
</dbReference>
<dbReference type="RefSeq" id="NP_465089.1">
    <property type="nucleotide sequence ID" value="NC_003210.1"/>
</dbReference>
<dbReference type="RefSeq" id="WP_010989743.1">
    <property type="nucleotide sequence ID" value="NZ_CP149495.1"/>
</dbReference>
<dbReference type="SMR" id="Q8Y6W7"/>
<dbReference type="STRING" id="169963.gene:17594221"/>
<dbReference type="PaxDb" id="169963-lmo1564"/>
<dbReference type="EnsemblBacteria" id="CAC99642">
    <property type="protein sequence ID" value="CAC99642"/>
    <property type="gene ID" value="CAC99642"/>
</dbReference>
<dbReference type="GeneID" id="986950"/>
<dbReference type="KEGG" id="lmo:lmo1564"/>
<dbReference type="PATRIC" id="fig|169963.11.peg.1605"/>
<dbReference type="eggNOG" id="COG0266">
    <property type="taxonomic scope" value="Bacteria"/>
</dbReference>
<dbReference type="HOGENOM" id="CLU_038423_1_2_9"/>
<dbReference type="OrthoDB" id="9800855at2"/>
<dbReference type="PhylomeDB" id="Q8Y6W7"/>
<dbReference type="BioCyc" id="LMON169963:LMO1564-MONOMER"/>
<dbReference type="Proteomes" id="UP000000817">
    <property type="component" value="Chromosome"/>
</dbReference>
<dbReference type="GO" id="GO:0034039">
    <property type="term" value="F:8-oxo-7,8-dihydroguanine DNA N-glycosylase activity"/>
    <property type="evidence" value="ECO:0000318"/>
    <property type="project" value="GO_Central"/>
</dbReference>
<dbReference type="GO" id="GO:0140078">
    <property type="term" value="F:class I DNA-(apurinic or apyrimidinic site) endonuclease activity"/>
    <property type="evidence" value="ECO:0007669"/>
    <property type="project" value="UniProtKB-EC"/>
</dbReference>
<dbReference type="GO" id="GO:0003684">
    <property type="term" value="F:damaged DNA binding"/>
    <property type="evidence" value="ECO:0007669"/>
    <property type="project" value="InterPro"/>
</dbReference>
<dbReference type="GO" id="GO:0003906">
    <property type="term" value="F:DNA-(apurinic or apyrimidinic site) endonuclease activity"/>
    <property type="evidence" value="ECO:0000318"/>
    <property type="project" value="GO_Central"/>
</dbReference>
<dbReference type="GO" id="GO:0008270">
    <property type="term" value="F:zinc ion binding"/>
    <property type="evidence" value="ECO:0007669"/>
    <property type="project" value="UniProtKB-UniRule"/>
</dbReference>
<dbReference type="GO" id="GO:0006284">
    <property type="term" value="P:base-excision repair"/>
    <property type="evidence" value="ECO:0000318"/>
    <property type="project" value="GO_Central"/>
</dbReference>
<dbReference type="CDD" id="cd08966">
    <property type="entry name" value="EcFpg-like_N"/>
    <property type="match status" value="1"/>
</dbReference>
<dbReference type="FunFam" id="1.10.8.50:FF:000003">
    <property type="entry name" value="Formamidopyrimidine-DNA glycosylase"/>
    <property type="match status" value="1"/>
</dbReference>
<dbReference type="FunFam" id="3.20.190.10:FF:000001">
    <property type="entry name" value="Formamidopyrimidine-DNA glycosylase"/>
    <property type="match status" value="1"/>
</dbReference>
<dbReference type="Gene3D" id="1.10.8.50">
    <property type="match status" value="1"/>
</dbReference>
<dbReference type="Gene3D" id="3.20.190.10">
    <property type="entry name" value="MutM-like, N-terminal"/>
    <property type="match status" value="1"/>
</dbReference>
<dbReference type="HAMAP" id="MF_00103">
    <property type="entry name" value="Fapy_DNA_glycosyl"/>
    <property type="match status" value="1"/>
</dbReference>
<dbReference type="InterPro" id="IPR015886">
    <property type="entry name" value="DNA_glyclase/AP_lyase_DNA-bd"/>
</dbReference>
<dbReference type="InterPro" id="IPR015887">
    <property type="entry name" value="DNA_glyclase_Znf_dom_DNA_BS"/>
</dbReference>
<dbReference type="InterPro" id="IPR020629">
    <property type="entry name" value="Formamido-pyr_DNA_Glyclase"/>
</dbReference>
<dbReference type="InterPro" id="IPR012319">
    <property type="entry name" value="FPG_cat"/>
</dbReference>
<dbReference type="InterPro" id="IPR035937">
    <property type="entry name" value="MutM-like_N-ter"/>
</dbReference>
<dbReference type="InterPro" id="IPR010979">
    <property type="entry name" value="Ribosomal_uS13-like_H2TH"/>
</dbReference>
<dbReference type="InterPro" id="IPR000214">
    <property type="entry name" value="Znf_DNA_glyclase/AP_lyase"/>
</dbReference>
<dbReference type="InterPro" id="IPR010663">
    <property type="entry name" value="Znf_FPG/IleRS"/>
</dbReference>
<dbReference type="NCBIfam" id="TIGR00577">
    <property type="entry name" value="fpg"/>
    <property type="match status" value="1"/>
</dbReference>
<dbReference type="NCBIfam" id="NF002211">
    <property type="entry name" value="PRK01103.1"/>
    <property type="match status" value="1"/>
</dbReference>
<dbReference type="PANTHER" id="PTHR22993">
    <property type="entry name" value="FORMAMIDOPYRIMIDINE-DNA GLYCOSYLASE"/>
    <property type="match status" value="1"/>
</dbReference>
<dbReference type="PANTHER" id="PTHR22993:SF9">
    <property type="entry name" value="FORMAMIDOPYRIMIDINE-DNA GLYCOSYLASE"/>
    <property type="match status" value="1"/>
</dbReference>
<dbReference type="Pfam" id="PF01149">
    <property type="entry name" value="Fapy_DNA_glyco"/>
    <property type="match status" value="1"/>
</dbReference>
<dbReference type="Pfam" id="PF06831">
    <property type="entry name" value="H2TH"/>
    <property type="match status" value="1"/>
</dbReference>
<dbReference type="Pfam" id="PF06827">
    <property type="entry name" value="zf-FPG_IleRS"/>
    <property type="match status" value="1"/>
</dbReference>
<dbReference type="SMART" id="SM00898">
    <property type="entry name" value="Fapy_DNA_glyco"/>
    <property type="match status" value="1"/>
</dbReference>
<dbReference type="SMART" id="SM01232">
    <property type="entry name" value="H2TH"/>
    <property type="match status" value="1"/>
</dbReference>
<dbReference type="SUPFAM" id="SSF57716">
    <property type="entry name" value="Glucocorticoid receptor-like (DNA-binding domain)"/>
    <property type="match status" value="1"/>
</dbReference>
<dbReference type="SUPFAM" id="SSF81624">
    <property type="entry name" value="N-terminal domain of MutM-like DNA repair proteins"/>
    <property type="match status" value="1"/>
</dbReference>
<dbReference type="SUPFAM" id="SSF46946">
    <property type="entry name" value="S13-like H2TH domain"/>
    <property type="match status" value="1"/>
</dbReference>
<dbReference type="PROSITE" id="PS51068">
    <property type="entry name" value="FPG_CAT"/>
    <property type="match status" value="1"/>
</dbReference>
<dbReference type="PROSITE" id="PS01242">
    <property type="entry name" value="ZF_FPG_1"/>
    <property type="match status" value="1"/>
</dbReference>
<dbReference type="PROSITE" id="PS51066">
    <property type="entry name" value="ZF_FPG_2"/>
    <property type="match status" value="1"/>
</dbReference>
<accession>Q8Y6W7</accession>
<keyword id="KW-0227">DNA damage</keyword>
<keyword id="KW-0234">DNA repair</keyword>
<keyword id="KW-0238">DNA-binding</keyword>
<keyword id="KW-0326">Glycosidase</keyword>
<keyword id="KW-0378">Hydrolase</keyword>
<keyword id="KW-0456">Lyase</keyword>
<keyword id="KW-0479">Metal-binding</keyword>
<keyword id="KW-0511">Multifunctional enzyme</keyword>
<keyword id="KW-1185">Reference proteome</keyword>
<keyword id="KW-0862">Zinc</keyword>
<keyword id="KW-0863">Zinc-finger</keyword>
<organism>
    <name type="scientific">Listeria monocytogenes serovar 1/2a (strain ATCC BAA-679 / EGD-e)</name>
    <dbReference type="NCBI Taxonomy" id="169963"/>
    <lineage>
        <taxon>Bacteria</taxon>
        <taxon>Bacillati</taxon>
        <taxon>Bacillota</taxon>
        <taxon>Bacilli</taxon>
        <taxon>Bacillales</taxon>
        <taxon>Listeriaceae</taxon>
        <taxon>Listeria</taxon>
    </lineage>
</organism>